<keyword id="KW-0028">Amino-acid biosynthesis</keyword>
<keyword id="KW-0057">Aromatic amino acid biosynthesis</keyword>
<keyword id="KW-0170">Cobalt</keyword>
<keyword id="KW-0963">Cytoplasm</keyword>
<keyword id="KW-0456">Lyase</keyword>
<keyword id="KW-0479">Metal-binding</keyword>
<keyword id="KW-0520">NAD</keyword>
<keyword id="KW-0547">Nucleotide-binding</keyword>
<keyword id="KW-0862">Zinc</keyword>
<proteinExistence type="inferred from homology"/>
<name>AROB_CHLCH</name>
<dbReference type="EC" id="4.2.3.4" evidence="1"/>
<dbReference type="EMBL" id="CP000108">
    <property type="protein sequence ID" value="ABB28481.1"/>
    <property type="molecule type" value="Genomic_DNA"/>
</dbReference>
<dbReference type="SMR" id="Q3AR94"/>
<dbReference type="STRING" id="340177.Cag_1219"/>
<dbReference type="KEGG" id="cch:Cag_1219"/>
<dbReference type="eggNOG" id="COG0337">
    <property type="taxonomic scope" value="Bacteria"/>
</dbReference>
<dbReference type="HOGENOM" id="CLU_001201_0_2_10"/>
<dbReference type="OrthoDB" id="9806583at2"/>
<dbReference type="UniPathway" id="UPA00053">
    <property type="reaction ID" value="UER00085"/>
</dbReference>
<dbReference type="GO" id="GO:0005737">
    <property type="term" value="C:cytoplasm"/>
    <property type="evidence" value="ECO:0007669"/>
    <property type="project" value="UniProtKB-SubCell"/>
</dbReference>
<dbReference type="GO" id="GO:0003856">
    <property type="term" value="F:3-dehydroquinate synthase activity"/>
    <property type="evidence" value="ECO:0007669"/>
    <property type="project" value="UniProtKB-UniRule"/>
</dbReference>
<dbReference type="GO" id="GO:0046872">
    <property type="term" value="F:metal ion binding"/>
    <property type="evidence" value="ECO:0007669"/>
    <property type="project" value="UniProtKB-KW"/>
</dbReference>
<dbReference type="GO" id="GO:0000166">
    <property type="term" value="F:nucleotide binding"/>
    <property type="evidence" value="ECO:0007669"/>
    <property type="project" value="UniProtKB-KW"/>
</dbReference>
<dbReference type="GO" id="GO:0008652">
    <property type="term" value="P:amino acid biosynthetic process"/>
    <property type="evidence" value="ECO:0007669"/>
    <property type="project" value="UniProtKB-KW"/>
</dbReference>
<dbReference type="GO" id="GO:0009073">
    <property type="term" value="P:aromatic amino acid family biosynthetic process"/>
    <property type="evidence" value="ECO:0007669"/>
    <property type="project" value="UniProtKB-KW"/>
</dbReference>
<dbReference type="GO" id="GO:0009423">
    <property type="term" value="P:chorismate biosynthetic process"/>
    <property type="evidence" value="ECO:0007669"/>
    <property type="project" value="UniProtKB-UniRule"/>
</dbReference>
<dbReference type="CDD" id="cd08195">
    <property type="entry name" value="DHQS"/>
    <property type="match status" value="1"/>
</dbReference>
<dbReference type="FunFam" id="3.40.50.1970:FF:000007">
    <property type="entry name" value="Pentafunctional AROM polypeptide"/>
    <property type="match status" value="1"/>
</dbReference>
<dbReference type="Gene3D" id="3.40.50.1970">
    <property type="match status" value="1"/>
</dbReference>
<dbReference type="Gene3D" id="1.20.1090.10">
    <property type="entry name" value="Dehydroquinate synthase-like - alpha domain"/>
    <property type="match status" value="1"/>
</dbReference>
<dbReference type="HAMAP" id="MF_00110">
    <property type="entry name" value="DHQ_synthase"/>
    <property type="match status" value="1"/>
</dbReference>
<dbReference type="InterPro" id="IPR050071">
    <property type="entry name" value="Dehydroquinate_synthase"/>
</dbReference>
<dbReference type="InterPro" id="IPR016037">
    <property type="entry name" value="DHQ_synth_AroB"/>
</dbReference>
<dbReference type="InterPro" id="IPR030963">
    <property type="entry name" value="DHQ_synth_fam"/>
</dbReference>
<dbReference type="InterPro" id="IPR030960">
    <property type="entry name" value="DHQS/DOIS_N"/>
</dbReference>
<dbReference type="InterPro" id="IPR056179">
    <property type="entry name" value="DHQS_C"/>
</dbReference>
<dbReference type="NCBIfam" id="TIGR01357">
    <property type="entry name" value="aroB"/>
    <property type="match status" value="1"/>
</dbReference>
<dbReference type="PANTHER" id="PTHR43622">
    <property type="entry name" value="3-DEHYDROQUINATE SYNTHASE"/>
    <property type="match status" value="1"/>
</dbReference>
<dbReference type="PANTHER" id="PTHR43622:SF7">
    <property type="entry name" value="3-DEHYDROQUINATE SYNTHASE, CHLOROPLASTIC"/>
    <property type="match status" value="1"/>
</dbReference>
<dbReference type="Pfam" id="PF01761">
    <property type="entry name" value="DHQ_synthase"/>
    <property type="match status" value="1"/>
</dbReference>
<dbReference type="Pfam" id="PF24621">
    <property type="entry name" value="DHQS_C"/>
    <property type="match status" value="1"/>
</dbReference>
<dbReference type="PIRSF" id="PIRSF001455">
    <property type="entry name" value="DHQ_synth"/>
    <property type="match status" value="1"/>
</dbReference>
<dbReference type="SUPFAM" id="SSF56796">
    <property type="entry name" value="Dehydroquinate synthase-like"/>
    <property type="match status" value="1"/>
</dbReference>
<organism>
    <name type="scientific">Chlorobium chlorochromatii (strain CaD3)</name>
    <dbReference type="NCBI Taxonomy" id="340177"/>
    <lineage>
        <taxon>Bacteria</taxon>
        <taxon>Pseudomonadati</taxon>
        <taxon>Chlorobiota</taxon>
        <taxon>Chlorobiia</taxon>
        <taxon>Chlorobiales</taxon>
        <taxon>Chlorobiaceae</taxon>
        <taxon>Chlorobium/Pelodictyon group</taxon>
        <taxon>Chlorobium</taxon>
    </lineage>
</organism>
<protein>
    <recommendedName>
        <fullName evidence="1">3-dehydroquinate synthase</fullName>
        <shortName evidence="1">DHQS</shortName>
        <ecNumber evidence="1">4.2.3.4</ecNumber>
    </recommendedName>
</protein>
<accession>Q3AR94</accession>
<comment type="function">
    <text evidence="1">Catalyzes the conversion of 3-deoxy-D-arabino-heptulosonate 7-phosphate (DAHP) to dehydroquinate (DHQ).</text>
</comment>
<comment type="catalytic activity">
    <reaction evidence="1">
        <text>7-phospho-2-dehydro-3-deoxy-D-arabino-heptonate = 3-dehydroquinate + phosphate</text>
        <dbReference type="Rhea" id="RHEA:21968"/>
        <dbReference type="ChEBI" id="CHEBI:32364"/>
        <dbReference type="ChEBI" id="CHEBI:43474"/>
        <dbReference type="ChEBI" id="CHEBI:58394"/>
        <dbReference type="EC" id="4.2.3.4"/>
    </reaction>
</comment>
<comment type="cofactor">
    <cofactor evidence="1">
        <name>Co(2+)</name>
        <dbReference type="ChEBI" id="CHEBI:48828"/>
    </cofactor>
    <cofactor evidence="1">
        <name>Zn(2+)</name>
        <dbReference type="ChEBI" id="CHEBI:29105"/>
    </cofactor>
    <text evidence="1">Binds 1 divalent metal cation per subunit. Can use either Co(2+) or Zn(2+).</text>
</comment>
<comment type="cofactor">
    <cofactor evidence="1">
        <name>NAD(+)</name>
        <dbReference type="ChEBI" id="CHEBI:57540"/>
    </cofactor>
</comment>
<comment type="pathway">
    <text evidence="1">Metabolic intermediate biosynthesis; chorismate biosynthesis; chorismate from D-erythrose 4-phosphate and phosphoenolpyruvate: step 2/7.</text>
</comment>
<comment type="subcellular location">
    <subcellularLocation>
        <location evidence="1">Cytoplasm</location>
    </subcellularLocation>
</comment>
<comment type="similarity">
    <text evidence="1">Belongs to the sugar phosphate cyclases superfamily. Dehydroquinate synthase family.</text>
</comment>
<sequence>MSTIIVKTPVTVGLQELFREHKLSKKSVVLFDSNTRKLFGDVVLEALRAEGFQLVELVIPAREASKSFSVAYRLYGQMIEADVDRSWNLLAVGGGVVGDLGGFIAASYFRGIPVIQMPTTLLAMTDSAIGGKVAINHPLGKNLIGFFHLPELVLIDPATLASLPRREIYAGLAEVVKYGFIADANFFDMLEAHFSEVATLQEPYLTEAVKTSALIKQDVVTRDFRELDGLRATLNFGHTFAHGLEKLADYRHLRHGEAVTMGLVCALYLSHRLGFLDAPSLERGLRLLQQFVFPKNVVERYFLASNSALLLESMFSDKKKLDKKLRFVLLKELGQAFLFEESVEDSEVLAAIESAKECFRQWQQK</sequence>
<reference key="1">
    <citation type="submission" date="2005-08" db="EMBL/GenBank/DDBJ databases">
        <title>Complete sequence of Chlorobium chlorochromatii CaD3.</title>
        <authorList>
            <consortium name="US DOE Joint Genome Institute"/>
            <person name="Copeland A."/>
            <person name="Lucas S."/>
            <person name="Lapidus A."/>
            <person name="Barry K."/>
            <person name="Detter J.C."/>
            <person name="Glavina T."/>
            <person name="Hammon N."/>
            <person name="Israni S."/>
            <person name="Pitluck S."/>
            <person name="Bryant D."/>
            <person name="Schmutz J."/>
            <person name="Larimer F."/>
            <person name="Land M."/>
            <person name="Kyrpides N."/>
            <person name="Ivanova N."/>
            <person name="Richardson P."/>
        </authorList>
    </citation>
    <scope>NUCLEOTIDE SEQUENCE [LARGE SCALE GENOMIC DNA]</scope>
    <source>
        <strain>CaD3</strain>
    </source>
</reference>
<gene>
    <name evidence="1" type="primary">aroB</name>
    <name type="ordered locus">Cag_1219</name>
</gene>
<feature type="chain" id="PRO_0000231079" description="3-dehydroquinate synthase">
    <location>
        <begin position="1"/>
        <end position="365"/>
    </location>
</feature>
<feature type="binding site" evidence="1">
    <location>
        <begin position="95"/>
        <end position="99"/>
    </location>
    <ligand>
        <name>NAD(+)</name>
        <dbReference type="ChEBI" id="CHEBI:57540"/>
    </ligand>
</feature>
<feature type="binding site" evidence="1">
    <location>
        <begin position="119"/>
        <end position="120"/>
    </location>
    <ligand>
        <name>NAD(+)</name>
        <dbReference type="ChEBI" id="CHEBI:57540"/>
    </ligand>
</feature>
<feature type="binding site" evidence="1">
    <location>
        <position position="132"/>
    </location>
    <ligand>
        <name>NAD(+)</name>
        <dbReference type="ChEBI" id="CHEBI:57540"/>
    </ligand>
</feature>
<feature type="binding site" evidence="1">
    <location>
        <position position="141"/>
    </location>
    <ligand>
        <name>NAD(+)</name>
        <dbReference type="ChEBI" id="CHEBI:57540"/>
    </ligand>
</feature>
<feature type="binding site" evidence="1">
    <location>
        <position position="174"/>
    </location>
    <ligand>
        <name>Zn(2+)</name>
        <dbReference type="ChEBI" id="CHEBI:29105"/>
    </ligand>
</feature>
<feature type="binding site" evidence="1">
    <location>
        <position position="238"/>
    </location>
    <ligand>
        <name>Zn(2+)</name>
        <dbReference type="ChEBI" id="CHEBI:29105"/>
    </ligand>
</feature>
<feature type="binding site" evidence="1">
    <location>
        <position position="255"/>
    </location>
    <ligand>
        <name>Zn(2+)</name>
        <dbReference type="ChEBI" id="CHEBI:29105"/>
    </ligand>
</feature>
<evidence type="ECO:0000255" key="1">
    <source>
        <dbReference type="HAMAP-Rule" id="MF_00110"/>
    </source>
</evidence>